<keyword id="KW-1015">Disulfide bond</keyword>
<keyword id="KW-1040">Host Golgi apparatus</keyword>
<keyword id="KW-1043">Host membrane</keyword>
<keyword id="KW-0472">Membrane</keyword>
<keyword id="KW-1185">Reference proteome</keyword>
<keyword id="KW-0732">Signal</keyword>
<keyword id="KW-0812">Transmembrane</keyword>
<keyword id="KW-1133">Transmembrane helix</keyword>
<keyword id="KW-0261">Viral envelope protein</keyword>
<keyword id="KW-0946">Virion</keyword>
<protein>
    <recommendedName>
        <fullName evidence="1">Envelope glycoprotein N</fullName>
    </recommendedName>
</protein>
<sequence length="115" mass="12391">MWLLRPAGSNFIVALIVLACAGPLTCSAQLDAGILNPWGSAGHNDAVMPGMFANSESDERFYSPHCSSRGLPLVNESMASVIFFLSLAMVCVAIVAILYNCCFNSFKNSVINSRW</sequence>
<evidence type="ECO:0000255" key="1">
    <source>
        <dbReference type="HAMAP-Rule" id="MF_04037"/>
    </source>
</evidence>
<organism>
    <name type="scientific">Psittacid herpesvirus 1 (isolate Amazon parrot/-/97-0001/1997)</name>
    <name type="common">PsHV-1</name>
    <name type="synonym">Pacheco's disease virus</name>
    <dbReference type="NCBI Taxonomy" id="670426"/>
    <lineage>
        <taxon>Viruses</taxon>
        <taxon>Duplodnaviria</taxon>
        <taxon>Heunggongvirae</taxon>
        <taxon>Peploviricota</taxon>
        <taxon>Herviviricetes</taxon>
        <taxon>Herpesvirales</taxon>
        <taxon>Orthoherpesviridae</taxon>
        <taxon>Alphaherpesvirinae</taxon>
        <taxon>Iltovirus</taxon>
        <taxon>Iltovirus psittacidalpha1</taxon>
        <taxon>Psittacid alphaherpesvirus 1</taxon>
    </lineage>
</organism>
<name>GN_PSHV1</name>
<organismHost>
    <name type="scientific">Amazona oratrix</name>
    <name type="common">yellow-headed parrot</name>
    <dbReference type="NCBI Taxonomy" id="152276"/>
</organismHost>
<dbReference type="EMBL" id="AY372243">
    <property type="protein sequence ID" value="AAQ73691.1"/>
    <property type="molecule type" value="Genomic_DNA"/>
</dbReference>
<dbReference type="RefSeq" id="NP_944385.1">
    <property type="nucleotide sequence ID" value="NC_005264.1"/>
</dbReference>
<dbReference type="SMR" id="Q6UDL9"/>
<dbReference type="GeneID" id="2657019"/>
<dbReference type="KEGG" id="vg:2657019"/>
<dbReference type="Proteomes" id="UP000006840">
    <property type="component" value="Segment"/>
</dbReference>
<dbReference type="GO" id="GO:0044177">
    <property type="term" value="C:host cell Golgi apparatus"/>
    <property type="evidence" value="ECO:0007669"/>
    <property type="project" value="UniProtKB-SubCell"/>
</dbReference>
<dbReference type="GO" id="GO:0033644">
    <property type="term" value="C:host cell membrane"/>
    <property type="evidence" value="ECO:0007669"/>
    <property type="project" value="UniProtKB-SubCell"/>
</dbReference>
<dbReference type="GO" id="GO:0016020">
    <property type="term" value="C:membrane"/>
    <property type="evidence" value="ECO:0007669"/>
    <property type="project" value="UniProtKB-KW"/>
</dbReference>
<dbReference type="GO" id="GO:0019031">
    <property type="term" value="C:viral envelope"/>
    <property type="evidence" value="ECO:0007669"/>
    <property type="project" value="UniProtKB-KW"/>
</dbReference>
<dbReference type="GO" id="GO:0055036">
    <property type="term" value="C:virion membrane"/>
    <property type="evidence" value="ECO:0007669"/>
    <property type="project" value="UniProtKB-SubCell"/>
</dbReference>
<dbReference type="HAMAP" id="MF_04037">
    <property type="entry name" value="HSV_GN"/>
    <property type="match status" value="1"/>
</dbReference>
<dbReference type="InterPro" id="IPR008647">
    <property type="entry name" value="GN_domain"/>
</dbReference>
<dbReference type="InterPro" id="IPR034707">
    <property type="entry name" value="HSV_GN"/>
</dbReference>
<dbReference type="Pfam" id="PF05702">
    <property type="entry name" value="Herpes_UL49_5"/>
    <property type="match status" value="1"/>
</dbReference>
<gene>
    <name evidence="1" type="primary">gN</name>
    <name type="ORF">UL49.5</name>
</gene>
<reference key="1">
    <citation type="journal article" date="2006" name="J. Virol.">
        <title>Psittacid herpesvirus 1 and infectious laryngotracheitis virus: Comparative genome sequence analysis of two avian alphaherpesviruses.</title>
        <authorList>
            <person name="Thureen D.R."/>
            <person name="Keeler C.L. Jr."/>
        </authorList>
    </citation>
    <scope>NUCLEOTIDE SEQUENCE [LARGE SCALE GENOMIC DNA]</scope>
</reference>
<accession>Q6UDL9</accession>
<feature type="signal peptide" evidence="1">
    <location>
        <begin position="1"/>
        <end position="27"/>
    </location>
</feature>
<feature type="chain" id="PRO_0000406833" description="Envelope glycoprotein N" evidence="1">
    <location>
        <begin position="28"/>
        <end position="115"/>
    </location>
</feature>
<feature type="topological domain" description="Virion surface" evidence="1">
    <location>
        <begin position="28"/>
        <end position="77"/>
    </location>
</feature>
<feature type="transmembrane region" description="Helical" evidence="1">
    <location>
        <begin position="78"/>
        <end position="98"/>
    </location>
</feature>
<feature type="topological domain" description="Intravirion" evidence="1">
    <location>
        <begin position="99"/>
        <end position="115"/>
    </location>
</feature>
<feature type="disulfide bond" description="Interchain (with gM)" evidence="1">
    <location>
        <position position="66"/>
    </location>
</feature>
<comment type="function">
    <text evidence="1">Envelope glycoprotein necessary for proper maturation of gM and modulation of its membrane fusion activity. Also plays a critical role in virion morphogenesis.</text>
</comment>
<comment type="subunit">
    <text evidence="1">Interacts (via N-terminus) with gM (via N-terminus). The gM-gN heterodimer forms the gCII complex.</text>
</comment>
<comment type="subcellular location">
    <subcellularLocation>
        <location evidence="1">Virion membrane</location>
        <topology evidence="1">Single-pass type I membrane protein</topology>
    </subcellularLocation>
    <subcellularLocation>
        <location evidence="1">Host membrane</location>
        <topology evidence="1">Single-pass type I membrane protein</topology>
    </subcellularLocation>
    <subcellularLocation>
        <location evidence="1">Host Golgi apparatus</location>
        <location evidence="1">Host trans-Golgi network</location>
    </subcellularLocation>
    <text evidence="1">When coexpressed with gM, localizes in the host trans-Golgi network.</text>
</comment>
<comment type="similarity">
    <text evidence="1">Belongs to the herpesviridae glycoprotein N family.</text>
</comment>
<proteinExistence type="inferred from homology"/>